<organism>
    <name type="scientific">Bacillus subtilis (strain 168)</name>
    <dbReference type="NCBI Taxonomy" id="224308"/>
    <lineage>
        <taxon>Bacteria</taxon>
        <taxon>Bacillati</taxon>
        <taxon>Bacillota</taxon>
        <taxon>Bacilli</taxon>
        <taxon>Bacillales</taxon>
        <taxon>Bacillaceae</taxon>
        <taxon>Bacillus</taxon>
    </lineage>
</organism>
<reference key="1">
    <citation type="journal article" date="1996" name="DNA Res.">
        <title>Cloning and sequencing of a 27.8-kb nucleotide sequence of the 79 degrees-81 degrees region of the Bacillus subtilis genome containing the sspE locus.</title>
        <authorList>
            <person name="Yamamoto H."/>
            <person name="Uchiyama S."/>
            <person name="Sekiguchi J."/>
        </authorList>
    </citation>
    <scope>NUCLEOTIDE SEQUENCE [GENOMIC DNA]</scope>
</reference>
<reference key="2">
    <citation type="journal article" date="1997" name="Nature">
        <title>The complete genome sequence of the Gram-positive bacterium Bacillus subtilis.</title>
        <authorList>
            <person name="Kunst F."/>
            <person name="Ogasawara N."/>
            <person name="Moszer I."/>
            <person name="Albertini A.M."/>
            <person name="Alloni G."/>
            <person name="Azevedo V."/>
            <person name="Bertero M.G."/>
            <person name="Bessieres P."/>
            <person name="Bolotin A."/>
            <person name="Borchert S."/>
            <person name="Borriss R."/>
            <person name="Boursier L."/>
            <person name="Brans A."/>
            <person name="Braun M."/>
            <person name="Brignell S.C."/>
            <person name="Bron S."/>
            <person name="Brouillet S."/>
            <person name="Bruschi C.V."/>
            <person name="Caldwell B."/>
            <person name="Capuano V."/>
            <person name="Carter N.M."/>
            <person name="Choi S.-K."/>
            <person name="Codani J.-J."/>
            <person name="Connerton I.F."/>
            <person name="Cummings N.J."/>
            <person name="Daniel R.A."/>
            <person name="Denizot F."/>
            <person name="Devine K.M."/>
            <person name="Duesterhoeft A."/>
            <person name="Ehrlich S.D."/>
            <person name="Emmerson P.T."/>
            <person name="Entian K.-D."/>
            <person name="Errington J."/>
            <person name="Fabret C."/>
            <person name="Ferrari E."/>
            <person name="Foulger D."/>
            <person name="Fritz C."/>
            <person name="Fujita M."/>
            <person name="Fujita Y."/>
            <person name="Fuma S."/>
            <person name="Galizzi A."/>
            <person name="Galleron N."/>
            <person name="Ghim S.-Y."/>
            <person name="Glaser P."/>
            <person name="Goffeau A."/>
            <person name="Golightly E.J."/>
            <person name="Grandi G."/>
            <person name="Guiseppi G."/>
            <person name="Guy B.J."/>
            <person name="Haga K."/>
            <person name="Haiech J."/>
            <person name="Harwood C.R."/>
            <person name="Henaut A."/>
            <person name="Hilbert H."/>
            <person name="Holsappel S."/>
            <person name="Hosono S."/>
            <person name="Hullo M.-F."/>
            <person name="Itaya M."/>
            <person name="Jones L.-M."/>
            <person name="Joris B."/>
            <person name="Karamata D."/>
            <person name="Kasahara Y."/>
            <person name="Klaerr-Blanchard M."/>
            <person name="Klein C."/>
            <person name="Kobayashi Y."/>
            <person name="Koetter P."/>
            <person name="Koningstein G."/>
            <person name="Krogh S."/>
            <person name="Kumano M."/>
            <person name="Kurita K."/>
            <person name="Lapidus A."/>
            <person name="Lardinois S."/>
            <person name="Lauber J."/>
            <person name="Lazarevic V."/>
            <person name="Lee S.-M."/>
            <person name="Levine A."/>
            <person name="Liu H."/>
            <person name="Masuda S."/>
            <person name="Mauel C."/>
            <person name="Medigue C."/>
            <person name="Medina N."/>
            <person name="Mellado R.P."/>
            <person name="Mizuno M."/>
            <person name="Moestl D."/>
            <person name="Nakai S."/>
            <person name="Noback M."/>
            <person name="Noone D."/>
            <person name="O'Reilly M."/>
            <person name="Ogawa K."/>
            <person name="Ogiwara A."/>
            <person name="Oudega B."/>
            <person name="Park S.-H."/>
            <person name="Parro V."/>
            <person name="Pohl T.M."/>
            <person name="Portetelle D."/>
            <person name="Porwollik S."/>
            <person name="Prescott A.M."/>
            <person name="Presecan E."/>
            <person name="Pujic P."/>
            <person name="Purnelle B."/>
            <person name="Rapoport G."/>
            <person name="Rey M."/>
            <person name="Reynolds S."/>
            <person name="Rieger M."/>
            <person name="Rivolta C."/>
            <person name="Rocha E."/>
            <person name="Roche B."/>
            <person name="Rose M."/>
            <person name="Sadaie Y."/>
            <person name="Sato T."/>
            <person name="Scanlan E."/>
            <person name="Schleich S."/>
            <person name="Schroeter R."/>
            <person name="Scoffone F."/>
            <person name="Sekiguchi J."/>
            <person name="Sekowska A."/>
            <person name="Seror S.J."/>
            <person name="Serror P."/>
            <person name="Shin B.-S."/>
            <person name="Soldo B."/>
            <person name="Sorokin A."/>
            <person name="Tacconi E."/>
            <person name="Takagi T."/>
            <person name="Takahashi H."/>
            <person name="Takemaru K."/>
            <person name="Takeuchi M."/>
            <person name="Tamakoshi A."/>
            <person name="Tanaka T."/>
            <person name="Terpstra P."/>
            <person name="Tognoni A."/>
            <person name="Tosato V."/>
            <person name="Uchiyama S."/>
            <person name="Vandenbol M."/>
            <person name="Vannier F."/>
            <person name="Vassarotti A."/>
            <person name="Viari A."/>
            <person name="Wambutt R."/>
            <person name="Wedler E."/>
            <person name="Wedler H."/>
            <person name="Weitzenegger T."/>
            <person name="Winters P."/>
            <person name="Wipat A."/>
            <person name="Yamamoto H."/>
            <person name="Yamane K."/>
            <person name="Yasumoto K."/>
            <person name="Yata K."/>
            <person name="Yoshida K."/>
            <person name="Yoshikawa H.-F."/>
            <person name="Zumstein E."/>
            <person name="Yoshikawa H."/>
            <person name="Danchin A."/>
        </authorList>
    </citation>
    <scope>NUCLEOTIDE SEQUENCE [LARGE SCALE GENOMIC DNA]</scope>
    <source>
        <strain>168</strain>
    </source>
</reference>
<reference key="3">
    <citation type="journal article" date="2009" name="Microbiology">
        <title>From a consortium sequence to a unified sequence: the Bacillus subtilis 168 reference genome a decade later.</title>
        <authorList>
            <person name="Barbe V."/>
            <person name="Cruveiller S."/>
            <person name="Kunst F."/>
            <person name="Lenoble P."/>
            <person name="Meurice G."/>
            <person name="Sekowska A."/>
            <person name="Vallenet D."/>
            <person name="Wang T."/>
            <person name="Moszer I."/>
            <person name="Medigue C."/>
            <person name="Danchin A."/>
        </authorList>
    </citation>
    <scope>SEQUENCE REVISION TO N-TERMINUS</scope>
</reference>
<name>YFHO_BACSU</name>
<comment type="subcellular location">
    <subcellularLocation>
        <location evidence="2">Cell membrane</location>
        <topology evidence="2">Multi-pass membrane protein</topology>
    </subcellularLocation>
</comment>
<comment type="sequence caution" evidence="2">
    <conflict type="frameshift">
        <sequence resource="EMBL-CDS" id="BAA24481"/>
    </conflict>
</comment>
<protein>
    <recommendedName>
        <fullName>Uncharacterized protein YfhO</fullName>
    </recommendedName>
</protein>
<evidence type="ECO:0000255" key="1"/>
<evidence type="ECO:0000305" key="2"/>
<sequence>MKRKHIMIYAASLLVSVLAHAFFVKEWAEGRYMTGPGDGLAQMIVFKKLLFDQYTHGNFFYNYSFGLGGGTFSQLGYYFSASFLFLAVSAAVWLLQAVQLIGETDTLFWAESAVFISIFKLSLIIFTSASVFHYLLKHRAASFTGAVLYGVSIIYFRHEAYWEFFTDTMVWLPLLVLGAEKIIRERRPAWFIVACSLTLINNFYFAYINLIFIGIYVLFRWLIRLEPHEEKRWIQIRLFLVSGFISFGISAAAFVPVVYGFLNNLRPPYSQKIEWLNFDDNILFSSRIIIVPAAFLLFLFIISFYKNRVFRLFAGLSLLFILFHFSPYAASVFNGFSAPQNRFEYVLAFTIAGAAAAGLSQLSELKRKELLPAAAVVLLLYLYHIQRYKLDIWKPANESILLLLLMTIAALFAAAFAKKRAKMAVYGIIILSSLFVANSYQKYALSEGGDLDSVTKEYLTSEEYRGRESSELIRRLQKEDDDPLMRIDWMNGVRNNTPIIYGFNGFSAYSSILNKDLLAFYWNDLSIDMGRESVSRYASLGDRANLYSLLYGKYYMTEKTNEASVPYGFKKHLETEHYAVYENQYMLPFVKTADAIYSESELDRLPALAKEQAMLKGIILKDPSGKTEQTPKPSNLITKSDITAKQAQYQNGLLTVTGENGGELIITPKQPSSAPGDYYVSFYLKSKAKDKGFTLKVNDYVTTRKSNKSIYKTGVNNITVRVPKSGHISINLPKGTYELRNIALYEENYQTLKNAVMQNKTEKADKLNWNKNRLTFSYHLSKDQYIMLPIPYEKGWELKINGKTQKIEKADYAFIGFKAQKGDNHIELTYYPPYFKISAIISLVSLLLAVFYIRRKKPGSI</sequence>
<gene>
    <name type="primary">yfhO</name>
    <name type="ordered locus">BSU08610</name>
</gene>
<feature type="chain" id="PRO_0000360563" description="Uncharacterized protein YfhO">
    <location>
        <begin position="1"/>
        <end position="861"/>
    </location>
</feature>
<feature type="transmembrane region" description="Helical" evidence="1">
    <location>
        <begin position="4"/>
        <end position="24"/>
    </location>
</feature>
<feature type="transmembrane region" description="Helical" evidence="1">
    <location>
        <begin position="75"/>
        <end position="95"/>
    </location>
</feature>
<feature type="transmembrane region" description="Helical" evidence="1">
    <location>
        <begin position="106"/>
        <end position="126"/>
    </location>
</feature>
<feature type="transmembrane region" description="Helical" evidence="1">
    <location>
        <begin position="159"/>
        <end position="179"/>
    </location>
</feature>
<feature type="transmembrane region" description="Helical" evidence="1">
    <location>
        <begin position="199"/>
        <end position="219"/>
    </location>
</feature>
<feature type="transmembrane region" description="Helical" evidence="1">
    <location>
        <begin position="238"/>
        <end position="258"/>
    </location>
</feature>
<feature type="transmembrane region" description="Helical" evidence="1">
    <location>
        <begin position="282"/>
        <end position="302"/>
    </location>
</feature>
<feature type="transmembrane region" description="Helical" evidence="1">
    <location>
        <begin position="313"/>
        <end position="333"/>
    </location>
</feature>
<feature type="transmembrane region" description="Helical" evidence="1">
    <location>
        <begin position="343"/>
        <end position="363"/>
    </location>
</feature>
<feature type="transmembrane region" description="Helical" evidence="1">
    <location>
        <begin position="370"/>
        <end position="385"/>
    </location>
</feature>
<feature type="transmembrane region" description="Helical" evidence="1">
    <location>
        <begin position="396"/>
        <end position="416"/>
    </location>
</feature>
<feature type="transmembrane region" description="Helical" evidence="1">
    <location>
        <begin position="425"/>
        <end position="445"/>
    </location>
</feature>
<feature type="transmembrane region" description="Helical" evidence="1">
    <location>
        <begin position="833"/>
        <end position="853"/>
    </location>
</feature>
<feature type="coiled-coil region" evidence="1">
    <location>
        <begin position="738"/>
        <end position="766"/>
    </location>
</feature>
<accession>O31582</accession>
<accession>Q79EV5</accession>
<dbReference type="EMBL" id="D85082">
    <property type="protein sequence ID" value="BAA24481.1"/>
    <property type="status" value="ALT_FRAME"/>
    <property type="molecule type" value="Genomic_DNA"/>
</dbReference>
<dbReference type="EMBL" id="AL009126">
    <property type="protein sequence ID" value="CAB12689.2"/>
    <property type="molecule type" value="Genomic_DNA"/>
</dbReference>
<dbReference type="PIR" id="G69801">
    <property type="entry name" value="G69801"/>
</dbReference>
<dbReference type="RefSeq" id="NP_388741.2">
    <property type="nucleotide sequence ID" value="NC_000964.3"/>
</dbReference>
<dbReference type="RefSeq" id="WP_003242872.1">
    <property type="nucleotide sequence ID" value="NZ_OZ025638.1"/>
</dbReference>
<dbReference type="FunCoup" id="O31582">
    <property type="interactions" value="33"/>
</dbReference>
<dbReference type="STRING" id="224308.BSU08610"/>
<dbReference type="PaxDb" id="224308-BSU08610"/>
<dbReference type="EnsemblBacteria" id="CAB12689">
    <property type="protein sequence ID" value="CAB12689"/>
    <property type="gene ID" value="BSU_08610"/>
</dbReference>
<dbReference type="GeneID" id="936195"/>
<dbReference type="KEGG" id="bsu:BSU08610"/>
<dbReference type="PATRIC" id="fig|224308.179.peg.929"/>
<dbReference type="eggNOG" id="COG4485">
    <property type="taxonomic scope" value="Bacteria"/>
</dbReference>
<dbReference type="InParanoid" id="O31582"/>
<dbReference type="OrthoDB" id="9815466at2"/>
<dbReference type="PhylomeDB" id="O31582"/>
<dbReference type="BioCyc" id="BSUB:BSU08610-MONOMER"/>
<dbReference type="Proteomes" id="UP000001570">
    <property type="component" value="Chromosome"/>
</dbReference>
<dbReference type="GO" id="GO:0005886">
    <property type="term" value="C:plasma membrane"/>
    <property type="evidence" value="ECO:0007669"/>
    <property type="project" value="UniProtKB-SubCell"/>
</dbReference>
<dbReference type="InterPro" id="IPR018580">
    <property type="entry name" value="Uncharacterised_YfhO"/>
</dbReference>
<dbReference type="PANTHER" id="PTHR38454:SF1">
    <property type="entry name" value="INTEGRAL MEMBRANE PROTEIN"/>
    <property type="match status" value="1"/>
</dbReference>
<dbReference type="PANTHER" id="PTHR38454">
    <property type="entry name" value="INTEGRAL MEMBRANE PROTEIN-RELATED"/>
    <property type="match status" value="1"/>
</dbReference>
<dbReference type="Pfam" id="PF09586">
    <property type="entry name" value="YfhO"/>
    <property type="match status" value="1"/>
</dbReference>
<proteinExistence type="predicted"/>
<keyword id="KW-1003">Cell membrane</keyword>
<keyword id="KW-0175">Coiled coil</keyword>
<keyword id="KW-0472">Membrane</keyword>
<keyword id="KW-1185">Reference proteome</keyword>
<keyword id="KW-0812">Transmembrane</keyword>
<keyword id="KW-1133">Transmembrane helix</keyword>